<proteinExistence type="inferred from homology"/>
<organism>
    <name type="scientific">Shigella dysenteriae serotype 1 (strain Sd197)</name>
    <dbReference type="NCBI Taxonomy" id="300267"/>
    <lineage>
        <taxon>Bacteria</taxon>
        <taxon>Pseudomonadati</taxon>
        <taxon>Pseudomonadota</taxon>
        <taxon>Gammaproteobacteria</taxon>
        <taxon>Enterobacterales</taxon>
        <taxon>Enterobacteriaceae</taxon>
        <taxon>Shigella</taxon>
    </lineage>
</organism>
<reference key="1">
    <citation type="journal article" date="2005" name="Nucleic Acids Res.">
        <title>Genome dynamics and diversity of Shigella species, the etiologic agents of bacillary dysentery.</title>
        <authorList>
            <person name="Yang F."/>
            <person name="Yang J."/>
            <person name="Zhang X."/>
            <person name="Chen L."/>
            <person name="Jiang Y."/>
            <person name="Yan Y."/>
            <person name="Tang X."/>
            <person name="Wang J."/>
            <person name="Xiong Z."/>
            <person name="Dong J."/>
            <person name="Xue Y."/>
            <person name="Zhu Y."/>
            <person name="Xu X."/>
            <person name="Sun L."/>
            <person name="Chen S."/>
            <person name="Nie H."/>
            <person name="Peng J."/>
            <person name="Xu J."/>
            <person name="Wang Y."/>
            <person name="Yuan Z."/>
            <person name="Wen Y."/>
            <person name="Yao Z."/>
            <person name="Shen Y."/>
            <person name="Qiang B."/>
            <person name="Hou Y."/>
            <person name="Yu J."/>
            <person name="Jin Q."/>
        </authorList>
    </citation>
    <scope>NUCLEOTIDE SEQUENCE [LARGE SCALE GENOMIC DNA]</scope>
    <source>
        <strain>Sd197</strain>
    </source>
</reference>
<keyword id="KW-0963">Cytoplasm</keyword>
<keyword id="KW-0238">DNA-binding</keyword>
<keyword id="KW-0275">Fatty acid biosynthesis</keyword>
<keyword id="KW-0276">Fatty acid metabolism</keyword>
<keyword id="KW-0444">Lipid biosynthesis</keyword>
<keyword id="KW-0443">Lipid metabolism</keyword>
<keyword id="KW-1185">Reference proteome</keyword>
<keyword id="KW-0678">Repressor</keyword>
<keyword id="KW-0804">Transcription</keyword>
<keyword id="KW-0805">Transcription regulation</keyword>
<gene>
    <name evidence="1" type="primary">fabR</name>
    <name type="ordered locus">SDY_3765</name>
</gene>
<protein>
    <recommendedName>
        <fullName evidence="1">HTH-type transcriptional repressor FabR</fullName>
    </recommendedName>
</protein>
<dbReference type="EMBL" id="CP000034">
    <property type="protein sequence ID" value="ABB63712.1"/>
    <property type="status" value="ALT_INIT"/>
    <property type="molecule type" value="Genomic_DNA"/>
</dbReference>
<dbReference type="RefSeq" id="YP_405203.1">
    <property type="nucleotide sequence ID" value="NC_007606.1"/>
</dbReference>
<dbReference type="SMR" id="Q32AE3"/>
<dbReference type="STRING" id="300267.SDY_3765"/>
<dbReference type="EnsemblBacteria" id="ABB63712">
    <property type="protein sequence ID" value="ABB63712"/>
    <property type="gene ID" value="SDY_3765"/>
</dbReference>
<dbReference type="KEGG" id="sdy:SDY_3765"/>
<dbReference type="PATRIC" id="fig|300267.13.peg.4452"/>
<dbReference type="HOGENOM" id="CLU_081861_0_0_6"/>
<dbReference type="Proteomes" id="UP000002716">
    <property type="component" value="Chromosome"/>
</dbReference>
<dbReference type="GO" id="GO:0005737">
    <property type="term" value="C:cytoplasm"/>
    <property type="evidence" value="ECO:0007669"/>
    <property type="project" value="UniProtKB-SubCell"/>
</dbReference>
<dbReference type="GO" id="GO:0003677">
    <property type="term" value="F:DNA binding"/>
    <property type="evidence" value="ECO:0007669"/>
    <property type="project" value="UniProtKB-KW"/>
</dbReference>
<dbReference type="GO" id="GO:0003700">
    <property type="term" value="F:DNA-binding transcription factor activity"/>
    <property type="evidence" value="ECO:0007669"/>
    <property type="project" value="UniProtKB-UniRule"/>
</dbReference>
<dbReference type="GO" id="GO:0006633">
    <property type="term" value="P:fatty acid biosynthetic process"/>
    <property type="evidence" value="ECO:0007669"/>
    <property type="project" value="UniProtKB-UniRule"/>
</dbReference>
<dbReference type="GO" id="GO:0045717">
    <property type="term" value="P:negative regulation of fatty acid biosynthetic process"/>
    <property type="evidence" value="ECO:0007669"/>
    <property type="project" value="UniProtKB-UniRule"/>
</dbReference>
<dbReference type="FunFam" id="1.10.10.60:FF:000034">
    <property type="entry name" value="HTH-type transcriptional repressor FabR"/>
    <property type="match status" value="1"/>
</dbReference>
<dbReference type="FunFam" id="1.10.357.10:FF:000001">
    <property type="entry name" value="HTH-type transcriptional repressor FabR"/>
    <property type="match status" value="1"/>
</dbReference>
<dbReference type="Gene3D" id="1.10.10.60">
    <property type="entry name" value="Homeodomain-like"/>
    <property type="match status" value="1"/>
</dbReference>
<dbReference type="Gene3D" id="1.10.357.10">
    <property type="entry name" value="Tetracycline Repressor, domain 2"/>
    <property type="match status" value="1"/>
</dbReference>
<dbReference type="HAMAP" id="MF_01190">
    <property type="entry name" value="HTH_type_FabR"/>
    <property type="match status" value="1"/>
</dbReference>
<dbReference type="InterPro" id="IPR054129">
    <property type="entry name" value="DesT_TetR_C"/>
</dbReference>
<dbReference type="InterPro" id="IPR009057">
    <property type="entry name" value="Homeodomain-like_sf"/>
</dbReference>
<dbReference type="InterPro" id="IPR001647">
    <property type="entry name" value="HTH_TetR"/>
</dbReference>
<dbReference type="InterPro" id="IPR050692">
    <property type="entry name" value="HTH_transcr_repressor_FabR"/>
</dbReference>
<dbReference type="InterPro" id="IPR023764">
    <property type="entry name" value="Tscrpt_reg_HTH_FabR"/>
</dbReference>
<dbReference type="NCBIfam" id="NF008402">
    <property type="entry name" value="PRK11202.1"/>
    <property type="match status" value="1"/>
</dbReference>
<dbReference type="PANTHER" id="PTHR47752">
    <property type="entry name" value="HTH-TYPE TRANSCRIPTIONAL REPRESSOR FABR"/>
    <property type="match status" value="1"/>
</dbReference>
<dbReference type="PANTHER" id="PTHR47752:SF1">
    <property type="entry name" value="HTH-TYPE TRANSCRIPTIONAL REPRESSOR FABR"/>
    <property type="match status" value="1"/>
</dbReference>
<dbReference type="Pfam" id="PF21943">
    <property type="entry name" value="TetR_C_46"/>
    <property type="match status" value="1"/>
</dbReference>
<dbReference type="Pfam" id="PF00440">
    <property type="entry name" value="TetR_N"/>
    <property type="match status" value="1"/>
</dbReference>
<dbReference type="SUPFAM" id="SSF46689">
    <property type="entry name" value="Homeodomain-like"/>
    <property type="match status" value="1"/>
</dbReference>
<dbReference type="PROSITE" id="PS50977">
    <property type="entry name" value="HTH_TETR_2"/>
    <property type="match status" value="1"/>
</dbReference>
<feature type="chain" id="PRO_0000293575" description="HTH-type transcriptional repressor FabR">
    <location>
        <begin position="1"/>
        <end position="215"/>
    </location>
</feature>
<feature type="domain" description="HTH tetR-type" evidence="1">
    <location>
        <begin position="10"/>
        <end position="70"/>
    </location>
</feature>
<feature type="DNA-binding region" description="H-T-H motif" evidence="1">
    <location>
        <begin position="33"/>
        <end position="52"/>
    </location>
</feature>
<accession>Q32AE3</accession>
<name>FABR_SHIDS</name>
<comment type="function">
    <text evidence="1">Represses the transcription of fabB, involved in unsaturated fatty acid (UFA) biosynthesis. By controlling UFA production, FabR directly influences the physical properties of the membrane bilayer.</text>
</comment>
<comment type="subunit">
    <text evidence="1">Homodimer.</text>
</comment>
<comment type="subcellular location">
    <subcellularLocation>
        <location evidence="1">Cytoplasm</location>
    </subcellularLocation>
</comment>
<comment type="sequence caution" evidence="2">
    <conflict type="erroneous initiation">
        <sequence resource="EMBL-CDS" id="ABB63712"/>
    </conflict>
</comment>
<sequence length="215" mass="24404">MGVRAQQKEKTRRSLVEAAFSQLSAERSFASLSLREVAREAGIAPTSFYRHFRDVDELGLTMVDESGLMLRQLMRQARQRIAKGGSVIRTSVSTFMEFIGNNPNAFRLLLRERSGTSAAFRAAVAREIQHFIAELADYLELENHMPRAFTEAQAEAMVTIVFSAGAEALDVGVEQRRQLEERLVLQLRMISKGAYYWYRREQEKTAIIPGNVKDE</sequence>
<evidence type="ECO:0000255" key="1">
    <source>
        <dbReference type="HAMAP-Rule" id="MF_01190"/>
    </source>
</evidence>
<evidence type="ECO:0000305" key="2"/>